<reference key="1">
    <citation type="submission" date="2008-04" db="EMBL/GenBank/DDBJ databases">
        <title>Complete sequence of chromosome of Exiguobacterium sibiricum 255-15.</title>
        <authorList>
            <consortium name="US DOE Joint Genome Institute"/>
            <person name="Copeland A."/>
            <person name="Lucas S."/>
            <person name="Lapidus A."/>
            <person name="Glavina del Rio T."/>
            <person name="Dalin E."/>
            <person name="Tice H."/>
            <person name="Bruce D."/>
            <person name="Goodwin L."/>
            <person name="Pitluck S."/>
            <person name="Kiss H."/>
            <person name="Chertkov O."/>
            <person name="Monk C."/>
            <person name="Brettin T."/>
            <person name="Detter J.C."/>
            <person name="Han C."/>
            <person name="Kuske C.R."/>
            <person name="Schmutz J."/>
            <person name="Larimer F."/>
            <person name="Land M."/>
            <person name="Hauser L."/>
            <person name="Kyrpides N."/>
            <person name="Mikhailova N."/>
            <person name="Vishnivetskaya T."/>
            <person name="Rodrigues D.F."/>
            <person name="Gilichinsky D."/>
            <person name="Tiedje J."/>
            <person name="Richardson P."/>
        </authorList>
    </citation>
    <scope>NUCLEOTIDE SEQUENCE [LARGE SCALE GENOMIC DNA]</scope>
    <source>
        <strain>DSM 17290 / CCUG 55495 / CIP 109462 / JCM 13490 / 255-15</strain>
    </source>
</reference>
<sequence>MILVIDVGNTNIVLGVYDEQTLLQHWRIATDRTRTTDEYGMLVKALFRDAELNVEDIEGIVLSSVVPPVVFPLENMCVRYFNRRPFVIGPGIKTGLDLKVDNPREVGADRIVNAVAATVKYDGPLIIVDFGTATTYCYIDAQKRYYGGIISPGVMVSTEALYNKAAKLPRIEIAKPQSTIGRNTVHAMQSGTYFGYVAQVDGLVHRMKEEMGEATVIATGGLARLISEESATIKIVDPFLTLDGLRIIYERNK</sequence>
<feature type="chain" id="PRO_1000140243" description="Type III pantothenate kinase">
    <location>
        <begin position="1"/>
        <end position="253"/>
    </location>
</feature>
<feature type="active site" description="Proton acceptor" evidence="1">
    <location>
        <position position="109"/>
    </location>
</feature>
<feature type="binding site" evidence="1">
    <location>
        <begin position="6"/>
        <end position="13"/>
    </location>
    <ligand>
        <name>ATP</name>
        <dbReference type="ChEBI" id="CHEBI:30616"/>
    </ligand>
</feature>
<feature type="binding site" evidence="1">
    <location>
        <begin position="107"/>
        <end position="110"/>
    </location>
    <ligand>
        <name>substrate</name>
    </ligand>
</feature>
<feature type="binding site" evidence="1">
    <location>
        <position position="129"/>
    </location>
    <ligand>
        <name>K(+)</name>
        <dbReference type="ChEBI" id="CHEBI:29103"/>
    </ligand>
</feature>
<feature type="binding site" evidence="1">
    <location>
        <position position="132"/>
    </location>
    <ligand>
        <name>ATP</name>
        <dbReference type="ChEBI" id="CHEBI:30616"/>
    </ligand>
</feature>
<feature type="binding site" evidence="1">
    <location>
        <position position="184"/>
    </location>
    <ligand>
        <name>substrate</name>
    </ligand>
</feature>
<proteinExistence type="inferred from homology"/>
<name>COAX_EXIS2</name>
<dbReference type="EC" id="2.7.1.33" evidence="1"/>
<dbReference type="EMBL" id="CP001022">
    <property type="protein sequence ID" value="ACB59540.1"/>
    <property type="molecule type" value="Genomic_DNA"/>
</dbReference>
<dbReference type="RefSeq" id="WP_012368966.1">
    <property type="nucleotide sequence ID" value="NC_010556.1"/>
</dbReference>
<dbReference type="SMR" id="B1YGQ7"/>
<dbReference type="STRING" id="262543.Exig_0053"/>
<dbReference type="KEGG" id="esi:Exig_0053"/>
<dbReference type="eggNOG" id="COG1521">
    <property type="taxonomic scope" value="Bacteria"/>
</dbReference>
<dbReference type="HOGENOM" id="CLU_066627_1_0_9"/>
<dbReference type="OrthoDB" id="9804707at2"/>
<dbReference type="UniPathway" id="UPA00241">
    <property type="reaction ID" value="UER00352"/>
</dbReference>
<dbReference type="Proteomes" id="UP000001681">
    <property type="component" value="Chromosome"/>
</dbReference>
<dbReference type="GO" id="GO:0005737">
    <property type="term" value="C:cytoplasm"/>
    <property type="evidence" value="ECO:0007669"/>
    <property type="project" value="UniProtKB-SubCell"/>
</dbReference>
<dbReference type="GO" id="GO:0005524">
    <property type="term" value="F:ATP binding"/>
    <property type="evidence" value="ECO:0007669"/>
    <property type="project" value="UniProtKB-UniRule"/>
</dbReference>
<dbReference type="GO" id="GO:0046872">
    <property type="term" value="F:metal ion binding"/>
    <property type="evidence" value="ECO:0007669"/>
    <property type="project" value="UniProtKB-KW"/>
</dbReference>
<dbReference type="GO" id="GO:0004594">
    <property type="term" value="F:pantothenate kinase activity"/>
    <property type="evidence" value="ECO:0007669"/>
    <property type="project" value="UniProtKB-UniRule"/>
</dbReference>
<dbReference type="GO" id="GO:0015937">
    <property type="term" value="P:coenzyme A biosynthetic process"/>
    <property type="evidence" value="ECO:0007669"/>
    <property type="project" value="UniProtKB-UniRule"/>
</dbReference>
<dbReference type="CDD" id="cd24015">
    <property type="entry name" value="ASKHA_NBD_PanK-III"/>
    <property type="match status" value="1"/>
</dbReference>
<dbReference type="Gene3D" id="3.30.420.40">
    <property type="match status" value="2"/>
</dbReference>
<dbReference type="HAMAP" id="MF_01274">
    <property type="entry name" value="Pantothen_kinase_3"/>
    <property type="match status" value="1"/>
</dbReference>
<dbReference type="InterPro" id="IPR043129">
    <property type="entry name" value="ATPase_NBD"/>
</dbReference>
<dbReference type="InterPro" id="IPR004619">
    <property type="entry name" value="Type_III_PanK"/>
</dbReference>
<dbReference type="NCBIfam" id="TIGR00671">
    <property type="entry name" value="baf"/>
    <property type="match status" value="1"/>
</dbReference>
<dbReference type="NCBIfam" id="NF009843">
    <property type="entry name" value="PRK13318.1-1"/>
    <property type="match status" value="1"/>
</dbReference>
<dbReference type="NCBIfam" id="NF009847">
    <property type="entry name" value="PRK13318.1-5"/>
    <property type="match status" value="1"/>
</dbReference>
<dbReference type="NCBIfam" id="NF009848">
    <property type="entry name" value="PRK13318.1-6"/>
    <property type="match status" value="1"/>
</dbReference>
<dbReference type="NCBIfam" id="NF009855">
    <property type="entry name" value="PRK13321.1"/>
    <property type="match status" value="1"/>
</dbReference>
<dbReference type="PANTHER" id="PTHR34265">
    <property type="entry name" value="TYPE III PANTOTHENATE KINASE"/>
    <property type="match status" value="1"/>
</dbReference>
<dbReference type="PANTHER" id="PTHR34265:SF1">
    <property type="entry name" value="TYPE III PANTOTHENATE KINASE"/>
    <property type="match status" value="1"/>
</dbReference>
<dbReference type="Pfam" id="PF03309">
    <property type="entry name" value="Pan_kinase"/>
    <property type="match status" value="1"/>
</dbReference>
<dbReference type="SUPFAM" id="SSF53067">
    <property type="entry name" value="Actin-like ATPase domain"/>
    <property type="match status" value="2"/>
</dbReference>
<gene>
    <name evidence="1" type="primary">coaX</name>
    <name type="ordered locus">Exig_0053</name>
</gene>
<keyword id="KW-0067">ATP-binding</keyword>
<keyword id="KW-0173">Coenzyme A biosynthesis</keyword>
<keyword id="KW-0963">Cytoplasm</keyword>
<keyword id="KW-0418">Kinase</keyword>
<keyword id="KW-0479">Metal-binding</keyword>
<keyword id="KW-0547">Nucleotide-binding</keyword>
<keyword id="KW-0630">Potassium</keyword>
<keyword id="KW-1185">Reference proteome</keyword>
<keyword id="KW-0808">Transferase</keyword>
<organism>
    <name type="scientific">Exiguobacterium sibiricum (strain DSM 17290 / CCUG 55495 / CIP 109462 / JCM 13490 / 255-15)</name>
    <dbReference type="NCBI Taxonomy" id="262543"/>
    <lineage>
        <taxon>Bacteria</taxon>
        <taxon>Bacillati</taxon>
        <taxon>Bacillota</taxon>
        <taxon>Bacilli</taxon>
        <taxon>Bacillales</taxon>
        <taxon>Bacillales Family XII. Incertae Sedis</taxon>
        <taxon>Exiguobacterium</taxon>
    </lineage>
</organism>
<accession>B1YGQ7</accession>
<evidence type="ECO:0000255" key="1">
    <source>
        <dbReference type="HAMAP-Rule" id="MF_01274"/>
    </source>
</evidence>
<protein>
    <recommendedName>
        <fullName evidence="1">Type III pantothenate kinase</fullName>
        <ecNumber evidence="1">2.7.1.33</ecNumber>
    </recommendedName>
    <alternativeName>
        <fullName evidence="1">PanK-III</fullName>
    </alternativeName>
    <alternativeName>
        <fullName evidence="1">Pantothenic acid kinase</fullName>
    </alternativeName>
</protein>
<comment type="function">
    <text evidence="1">Catalyzes the phosphorylation of pantothenate (Pan), the first step in CoA biosynthesis.</text>
</comment>
<comment type="catalytic activity">
    <reaction evidence="1">
        <text>(R)-pantothenate + ATP = (R)-4'-phosphopantothenate + ADP + H(+)</text>
        <dbReference type="Rhea" id="RHEA:16373"/>
        <dbReference type="ChEBI" id="CHEBI:10986"/>
        <dbReference type="ChEBI" id="CHEBI:15378"/>
        <dbReference type="ChEBI" id="CHEBI:29032"/>
        <dbReference type="ChEBI" id="CHEBI:30616"/>
        <dbReference type="ChEBI" id="CHEBI:456216"/>
        <dbReference type="EC" id="2.7.1.33"/>
    </reaction>
</comment>
<comment type="cofactor">
    <cofactor evidence="1">
        <name>NH4(+)</name>
        <dbReference type="ChEBI" id="CHEBI:28938"/>
    </cofactor>
    <cofactor evidence="1">
        <name>K(+)</name>
        <dbReference type="ChEBI" id="CHEBI:29103"/>
    </cofactor>
    <text evidence="1">A monovalent cation. Ammonium or potassium.</text>
</comment>
<comment type="pathway">
    <text evidence="1">Cofactor biosynthesis; coenzyme A biosynthesis; CoA from (R)-pantothenate: step 1/5.</text>
</comment>
<comment type="subunit">
    <text evidence="1">Homodimer.</text>
</comment>
<comment type="subcellular location">
    <subcellularLocation>
        <location evidence="1">Cytoplasm</location>
    </subcellularLocation>
</comment>
<comment type="similarity">
    <text evidence="1">Belongs to the type III pantothenate kinase family.</text>
</comment>